<name>CITC_MONPU</name>
<keyword id="KW-0274">FAD</keyword>
<keyword id="KW-0285">Flavoprotein</keyword>
<keyword id="KW-0560">Oxidoreductase</keyword>
<gene>
    <name evidence="8" type="primary">mpl7</name>
</gene>
<reference key="1">
    <citation type="journal article" date="2017" name="J. Biotechnol.">
        <title>Methylotrophic yeast Pichia pastoris as a chassis organism for polyketide synthesis via the full citrinin biosynthetic pathway.</title>
        <authorList>
            <person name="Xue Y."/>
            <person name="Kong C."/>
            <person name="Shen W."/>
            <person name="Bai C."/>
            <person name="Ren Y."/>
            <person name="Zhou X."/>
            <person name="Zhang Y."/>
            <person name="Cai M."/>
        </authorList>
    </citation>
    <scope>NUCLEOTIDE SEQUENCE [GENOMIC DNA]</scope>
    <scope>FUNCTION</scope>
    <scope>CATALYTIC ACTIVITY</scope>
    <scope>PATHWAY</scope>
</reference>
<reference key="2">
    <citation type="journal article" date="2008" name="J. Agric. Food Chem.">
        <title>Exploring the distribution of citrinin biosynthesis related genes among Monascus species.</title>
        <authorList>
            <person name="Chen Y.P."/>
            <person name="Tseng C.P."/>
            <person name="Chien I.L."/>
            <person name="Wang W.Y."/>
            <person name="Liaw L.L."/>
            <person name="Yuan G.F."/>
        </authorList>
    </citation>
    <scope>FUNCTION</scope>
</reference>
<reference key="3">
    <citation type="journal article" date="2008" name="J. Biosci. Bioeng.">
        <title>Construction of a citrinin gene cluster expression system in heterologous Aspergillus oryzae.</title>
        <authorList>
            <person name="Sakai K."/>
            <person name="Kinoshita H."/>
            <person name="Shimizu T."/>
            <person name="Nihira T."/>
        </authorList>
    </citation>
    <scope>FUNCTION</scope>
</reference>
<reference key="4">
    <citation type="journal article" date="2017" name="Cell Chem. Biol.">
        <title>Functional and structural analysis of programmed C-methylation in the biosynthesis of the fungal polyketide citrinin.</title>
        <authorList>
            <person name="Storm P.A."/>
            <person name="Herbst D.A."/>
            <person name="Maier T."/>
            <person name="Townsend C.A."/>
        </authorList>
    </citation>
    <scope>FUNCTION</scope>
</reference>
<comment type="function">
    <text evidence="1 4 5 6 7">Dehydrogenase; part of the gene cluster that mediates the biosynthesis of the mycotoxin citrinin, a hepato-nephrotoxic compound to humans due to inhibition of respiration complex III (PubMed:19012408, PubMed:19111642, PubMed:27913218, PubMed:28238725). The pathway begins with the synthesis of a keto-aldehyde intermediate by the citrinin PKS (pksCT) from successive condensations of 4 malonyl-CoA units, presumably with a simple acetyl-CoA starter unit (PubMed:28238725). Release of the keto-aldehyde intermediate is consistent with the presence of the C-terminal reductive release domain (PubMed:28238725). Mp11 collaborates with pksCT by catalyzing the hydrolysis of ACP-bound acyl intermediates to free the ACP from stalled intermediates (By similarity). Mpl2 then catalyzes the oxidation of the C-12 methyl of the ketone intermediate to an alcohol intermediate which is further oxidized by the oxidoreductase mpl7 to produce a bisaldehyde intermediate (PubMed:27913218). The fourth catalytic step is catalyzed by the mpl4 aldehyde dehydrogenase (PubMed:27913218). The final transformation is the reduction of C-3 by mpl6 to provide the chemically stable citrinin nucleus (PubMed:27913218).</text>
</comment>
<comment type="cofactor">
    <cofactor evidence="2">
        <name>FAD</name>
        <dbReference type="ChEBI" id="CHEBI:57692"/>
    </cofactor>
</comment>
<comment type="pathway">
    <text evidence="6">Mycotoxin biosynthesis.</text>
</comment>
<comment type="subunit">
    <text evidence="3">Homodimer.</text>
</comment>
<comment type="similarity">
    <text evidence="9">Belongs to the GMC oxidoreductase family.</text>
</comment>
<protein>
    <recommendedName>
        <fullName evidence="8">Dehydrogenase mpl7</fullName>
        <ecNumber evidence="10">1.1.-.-</ecNumber>
    </recommendedName>
    <alternativeName>
        <fullName evidence="8">Citrinin synthesis protein mpl7</fullName>
    </alternativeName>
</protein>
<accession>A0A142PTM2</accession>
<evidence type="ECO:0000250" key="1">
    <source>
        <dbReference type="UniProtKB" id="A0A161CKG1"/>
    </source>
</evidence>
<evidence type="ECO:0000250" key="2">
    <source>
        <dbReference type="UniProtKB" id="E4QP00"/>
    </source>
</evidence>
<evidence type="ECO:0000250" key="3">
    <source>
        <dbReference type="UniProtKB" id="Q12062"/>
    </source>
</evidence>
<evidence type="ECO:0000269" key="4">
    <source>
    </source>
</evidence>
<evidence type="ECO:0000269" key="5">
    <source>
    </source>
</evidence>
<evidence type="ECO:0000269" key="6">
    <source>
    </source>
</evidence>
<evidence type="ECO:0000269" key="7">
    <source>
    </source>
</evidence>
<evidence type="ECO:0000303" key="8">
    <source>
    </source>
</evidence>
<evidence type="ECO:0000305" key="9"/>
<evidence type="ECO:0000305" key="10">
    <source>
    </source>
</evidence>
<sequence>MATVKVIDFIQTPFDFLIVGGGTAGLVLAARLSEEPGIQVGVIEAGSLRLGDPKVDLPTGPGQMLGDPGYDWNFESIPQAGANAKAYHIPRGRMLGGSSGINFMSYNRPSAEDIDDWANKLGVKGWTWSELLPYFKRSENLEPIEPSASCPVSPKVHGTGGPIHTSIGPWQAPIEESLLAAFDEAARLQRPAEPYSGAHLGFYRSLFTLDRTSTPVRSYAVSGYYAPVMGRPNLKVLENAQVCRILLSDASDGIPVAEGVELHHAGARYAVSARREVILSAGSVQSPQLLELSGIGDPSVLEGAGIACRVANTDVGSNLQEHTMSAVSYECADGIMSVDSLFKDPALLEEHQSLYAKNHSGALSGSVSLMGFTPYSSLSTETQVDATMARIFDAPSVSGRLSQQNASYQRRQQEAVAARMQNRWSADIQFIGTPAYFNTAAGYASCAKIMSGPPVGYSACYSIVVSNMYPLSRGSVHVRTSNPMDAPAIDPGFLSHPVDVDVLAAGIVFADRVFRSTLLNGKVRRRVSPPAGLDLSNMDEARQFVRNHIVPYHHALGTCAMGQVVDEKLRVKGVRRLRVVDASVMPMQVSAAIMATVYAIAERASDIIKKDCGFGRRLRAHI</sequence>
<organism>
    <name type="scientific">Monascus purpureus</name>
    <name type="common">Red mold</name>
    <name type="synonym">Monascus anka</name>
    <dbReference type="NCBI Taxonomy" id="5098"/>
    <lineage>
        <taxon>Eukaryota</taxon>
        <taxon>Fungi</taxon>
        <taxon>Dikarya</taxon>
        <taxon>Ascomycota</taxon>
        <taxon>Pezizomycotina</taxon>
        <taxon>Eurotiomycetes</taxon>
        <taxon>Eurotiomycetidae</taxon>
        <taxon>Eurotiales</taxon>
        <taxon>Aspergillaceae</taxon>
        <taxon>Monascus</taxon>
    </lineage>
</organism>
<dbReference type="EC" id="1.1.-.-" evidence="10"/>
<dbReference type="EMBL" id="KU923369">
    <property type="protein sequence ID" value="AMU19396.1"/>
    <property type="molecule type" value="Genomic_DNA"/>
</dbReference>
<dbReference type="SMR" id="A0A142PTM2"/>
<dbReference type="OrthoDB" id="269227at2759"/>
<dbReference type="GO" id="GO:0050660">
    <property type="term" value="F:flavin adenine dinucleotide binding"/>
    <property type="evidence" value="ECO:0007669"/>
    <property type="project" value="InterPro"/>
</dbReference>
<dbReference type="GO" id="GO:0016614">
    <property type="term" value="F:oxidoreductase activity, acting on CH-OH group of donors"/>
    <property type="evidence" value="ECO:0007669"/>
    <property type="project" value="InterPro"/>
</dbReference>
<dbReference type="GO" id="GO:0044550">
    <property type="term" value="P:secondary metabolite biosynthetic process"/>
    <property type="evidence" value="ECO:0007669"/>
    <property type="project" value="UniProtKB-ARBA"/>
</dbReference>
<dbReference type="Gene3D" id="3.50.50.60">
    <property type="entry name" value="FAD/NAD(P)-binding domain"/>
    <property type="match status" value="1"/>
</dbReference>
<dbReference type="Gene3D" id="3.30.560.10">
    <property type="entry name" value="Glucose Oxidase, domain 3"/>
    <property type="match status" value="1"/>
</dbReference>
<dbReference type="InterPro" id="IPR036188">
    <property type="entry name" value="FAD/NAD-bd_sf"/>
</dbReference>
<dbReference type="InterPro" id="IPR012132">
    <property type="entry name" value="GMC_OxRdtase"/>
</dbReference>
<dbReference type="InterPro" id="IPR000172">
    <property type="entry name" value="GMC_OxRdtase_N"/>
</dbReference>
<dbReference type="InterPro" id="IPR007867">
    <property type="entry name" value="GMC_OxRtase_C"/>
</dbReference>
<dbReference type="PANTHER" id="PTHR11552">
    <property type="entry name" value="GLUCOSE-METHANOL-CHOLINE GMC OXIDOREDUCTASE"/>
    <property type="match status" value="1"/>
</dbReference>
<dbReference type="PANTHER" id="PTHR11552:SF210">
    <property type="entry name" value="GLUCOSE-METHANOL-CHOLINE OXIDOREDUCTASE N-TERMINAL DOMAIN-CONTAINING PROTEIN-RELATED"/>
    <property type="match status" value="1"/>
</dbReference>
<dbReference type="Pfam" id="PF05199">
    <property type="entry name" value="GMC_oxred_C"/>
    <property type="match status" value="1"/>
</dbReference>
<dbReference type="Pfam" id="PF00732">
    <property type="entry name" value="GMC_oxred_N"/>
    <property type="match status" value="1"/>
</dbReference>
<dbReference type="PIRSF" id="PIRSF000137">
    <property type="entry name" value="Alcohol_oxidase"/>
    <property type="match status" value="1"/>
</dbReference>
<dbReference type="SUPFAM" id="SSF54373">
    <property type="entry name" value="FAD-linked reductases, C-terminal domain"/>
    <property type="match status" value="1"/>
</dbReference>
<dbReference type="SUPFAM" id="SSF51905">
    <property type="entry name" value="FAD/NAD(P)-binding domain"/>
    <property type="match status" value="1"/>
</dbReference>
<dbReference type="PROSITE" id="PS00623">
    <property type="entry name" value="GMC_OXRED_1"/>
    <property type="match status" value="1"/>
</dbReference>
<dbReference type="PROSITE" id="PS00624">
    <property type="entry name" value="GMC_OXRED_2"/>
    <property type="match status" value="1"/>
</dbReference>
<proteinExistence type="evidence at protein level"/>
<feature type="chain" id="PRO_0000440318" description="Dehydrogenase mpl7">
    <location>
        <begin position="1"/>
        <end position="622"/>
    </location>
</feature>
<feature type="active site" description="Proton acceptor" evidence="2">
    <location>
        <position position="554"/>
    </location>
</feature>
<feature type="binding site" evidence="2">
    <location>
        <begin position="23"/>
        <end position="24"/>
    </location>
    <ligand>
        <name>FAD</name>
        <dbReference type="ChEBI" id="CHEBI:57692"/>
    </ligand>
</feature>
<feature type="binding site" evidence="2">
    <location>
        <begin position="44"/>
        <end position="45"/>
    </location>
    <ligand>
        <name>FAD</name>
        <dbReference type="ChEBI" id="CHEBI:57692"/>
    </ligand>
</feature>
<feature type="binding site" evidence="2">
    <location>
        <begin position="102"/>
        <end position="105"/>
    </location>
    <ligand>
        <name>FAD</name>
        <dbReference type="ChEBI" id="CHEBI:57692"/>
    </ligand>
</feature>
<feature type="binding site" evidence="2">
    <location>
        <position position="582"/>
    </location>
    <ligand>
        <name>FAD</name>
        <dbReference type="ChEBI" id="CHEBI:57692"/>
    </ligand>
</feature>
<feature type="binding site" evidence="2">
    <location>
        <begin position="593"/>
        <end position="594"/>
    </location>
    <ligand>
        <name>FAD</name>
        <dbReference type="ChEBI" id="CHEBI:57692"/>
    </ligand>
</feature>